<accession>Q1XDK4</accession>
<sequence length="751" mass="83179">MAISSKEQETKKVKISVDKNPVDTSFEKWAQPGHFSRTLAKGPRTTTWIWNLHADAHDFDSQTSSLEEVSRKIFSAHFGQLSVIFLWLSGMYFHGARFSNYVAWLSNPTGIKPSAQVVWPIVGQEILNGDVGGGFQGVQVTSGWFQLWRASGITTEFQLYCTAIGGLAMAALMLFAGWFHYHKAAPKLEWFQNVESMMNHHLAGLLGLGCLGWTGHQIHLSLPINKLLDSGVSPQEIPLPHEFLINRELMAQLYPSFSKGLVPFFTLNWAEYSDFLTFKGGLNPVTGGLWLSDTAHHHLALAVLFLAAGHMYRTNWGIGHSMKEILEAHKGPFTGNGHEGLYEILTTSWHAQLAINLAMMGSLSIIVAHHMYAMPPYPYIATDYPTQLSLFTHHMWIGGFCIVGAGAHASIFMVRDYNPAENYNNLRSSSRHRDAIVSHLNWVCIFLGFHSFGLYIHNDTMRALGRSQDMFSDTAIQLQPIFAQWVQSIHTLAPGNTAPNALATASYAFGGDIVSVGNKVAMMPISLGTADFLVHHIHAFTIHVTVLILVKGFLFSRNSRLIPDKANLGFRFPCDGPGRGGTCQVSGWDHVFLGLFWMYNSLSVAIFHFSWKMQSDVWGSVSPSGNVSHITGGNFAQSAITINGWLRDFLWAQASQVIQSYGSALSAYGLIFLAAHFVWAFSLMFLFSGRGYWQELIESIVWAHNKIKVAPAIQPRALSITQGRAVGVAHYLLGGIGTTWAFFLARIISVG</sequence>
<dbReference type="EC" id="1.97.1.12" evidence="1"/>
<dbReference type="EMBL" id="AP006715">
    <property type="protein sequence ID" value="BAE92407.1"/>
    <property type="molecule type" value="Genomic_DNA"/>
</dbReference>
<dbReference type="RefSeq" id="YP_536964.1">
    <property type="nucleotide sequence ID" value="NC_007932.1"/>
</dbReference>
<dbReference type="SMR" id="Q1XDK4"/>
<dbReference type="GeneID" id="3978946"/>
<dbReference type="GO" id="GO:0009535">
    <property type="term" value="C:chloroplast thylakoid membrane"/>
    <property type="evidence" value="ECO:0007669"/>
    <property type="project" value="UniProtKB-SubCell"/>
</dbReference>
<dbReference type="GO" id="GO:0009522">
    <property type="term" value="C:photosystem I"/>
    <property type="evidence" value="ECO:0007669"/>
    <property type="project" value="UniProtKB-KW"/>
</dbReference>
<dbReference type="GO" id="GO:0051539">
    <property type="term" value="F:4 iron, 4 sulfur cluster binding"/>
    <property type="evidence" value="ECO:0007669"/>
    <property type="project" value="UniProtKB-KW"/>
</dbReference>
<dbReference type="GO" id="GO:0016168">
    <property type="term" value="F:chlorophyll binding"/>
    <property type="evidence" value="ECO:0007669"/>
    <property type="project" value="UniProtKB-KW"/>
</dbReference>
<dbReference type="GO" id="GO:0009055">
    <property type="term" value="F:electron transfer activity"/>
    <property type="evidence" value="ECO:0007669"/>
    <property type="project" value="UniProtKB-UniRule"/>
</dbReference>
<dbReference type="GO" id="GO:0000287">
    <property type="term" value="F:magnesium ion binding"/>
    <property type="evidence" value="ECO:0007669"/>
    <property type="project" value="UniProtKB-UniRule"/>
</dbReference>
<dbReference type="GO" id="GO:0016491">
    <property type="term" value="F:oxidoreductase activity"/>
    <property type="evidence" value="ECO:0007669"/>
    <property type="project" value="UniProtKB-KW"/>
</dbReference>
<dbReference type="GO" id="GO:0015979">
    <property type="term" value="P:photosynthesis"/>
    <property type="evidence" value="ECO:0007669"/>
    <property type="project" value="UniProtKB-UniRule"/>
</dbReference>
<dbReference type="Gene3D" id="1.20.1130.10">
    <property type="entry name" value="Photosystem I PsaA/PsaB"/>
    <property type="match status" value="1"/>
</dbReference>
<dbReference type="HAMAP" id="MF_00458">
    <property type="entry name" value="PSI_PsaA"/>
    <property type="match status" value="1"/>
</dbReference>
<dbReference type="InterPro" id="IPR006243">
    <property type="entry name" value="PSI_PsaA"/>
</dbReference>
<dbReference type="InterPro" id="IPR001280">
    <property type="entry name" value="PSI_PsaA/B"/>
</dbReference>
<dbReference type="InterPro" id="IPR020586">
    <property type="entry name" value="PSI_PsaA/B_CS"/>
</dbReference>
<dbReference type="InterPro" id="IPR036408">
    <property type="entry name" value="PSI_PsaA/B_sf"/>
</dbReference>
<dbReference type="NCBIfam" id="TIGR01335">
    <property type="entry name" value="psaA"/>
    <property type="match status" value="1"/>
</dbReference>
<dbReference type="PANTHER" id="PTHR30128">
    <property type="entry name" value="OUTER MEMBRANE PROTEIN, OMPA-RELATED"/>
    <property type="match status" value="1"/>
</dbReference>
<dbReference type="PANTHER" id="PTHR30128:SF19">
    <property type="entry name" value="PHOTOSYSTEM I P700 CHLOROPHYLL A APOPROTEIN A1-RELATED"/>
    <property type="match status" value="1"/>
</dbReference>
<dbReference type="Pfam" id="PF00223">
    <property type="entry name" value="PsaA_PsaB"/>
    <property type="match status" value="1"/>
</dbReference>
<dbReference type="PIRSF" id="PIRSF002905">
    <property type="entry name" value="PSI_A"/>
    <property type="match status" value="1"/>
</dbReference>
<dbReference type="PRINTS" id="PR00257">
    <property type="entry name" value="PHOTSYSPSAAB"/>
</dbReference>
<dbReference type="SUPFAM" id="SSF81558">
    <property type="entry name" value="Photosystem I subunits PsaA/PsaB"/>
    <property type="match status" value="1"/>
</dbReference>
<dbReference type="PROSITE" id="PS00419">
    <property type="entry name" value="PHOTOSYSTEM_I_PSAAB"/>
    <property type="match status" value="1"/>
</dbReference>
<protein>
    <recommendedName>
        <fullName evidence="1">Photosystem I P700 chlorophyll a apoprotein A1</fullName>
        <ecNumber evidence="1">1.97.1.12</ecNumber>
    </recommendedName>
    <alternativeName>
        <fullName evidence="1">PSI-A</fullName>
    </alternativeName>
    <alternativeName>
        <fullName evidence="1">PsaA</fullName>
    </alternativeName>
</protein>
<organism>
    <name type="scientific">Pyropia yezoensis</name>
    <name type="common">Susabi-nori</name>
    <name type="synonym">Porphyra yezoensis</name>
    <dbReference type="NCBI Taxonomy" id="2788"/>
    <lineage>
        <taxon>Eukaryota</taxon>
        <taxon>Rhodophyta</taxon>
        <taxon>Bangiophyceae</taxon>
        <taxon>Bangiales</taxon>
        <taxon>Bangiaceae</taxon>
        <taxon>Pyropia</taxon>
    </lineage>
</organism>
<feature type="chain" id="PRO_0000275970" description="Photosystem I P700 chlorophyll a apoprotein A1">
    <location>
        <begin position="1"/>
        <end position="751"/>
    </location>
</feature>
<feature type="transmembrane region" description="Helical; Name=I" evidence="1">
    <location>
        <begin position="73"/>
        <end position="96"/>
    </location>
</feature>
<feature type="transmembrane region" description="Helical; Name=II" evidence="1">
    <location>
        <begin position="159"/>
        <end position="182"/>
    </location>
</feature>
<feature type="transmembrane region" description="Helical; Name=III" evidence="1">
    <location>
        <begin position="198"/>
        <end position="222"/>
    </location>
</feature>
<feature type="transmembrane region" description="Helical; Name=IV" evidence="1">
    <location>
        <begin position="294"/>
        <end position="312"/>
    </location>
</feature>
<feature type="transmembrane region" description="Helical; Name=V" evidence="1">
    <location>
        <begin position="349"/>
        <end position="372"/>
    </location>
</feature>
<feature type="transmembrane region" description="Helical; Name=VI" evidence="1">
    <location>
        <begin position="388"/>
        <end position="414"/>
    </location>
</feature>
<feature type="transmembrane region" description="Helical; Name=VII" evidence="1">
    <location>
        <begin position="435"/>
        <end position="457"/>
    </location>
</feature>
<feature type="transmembrane region" description="Helical; Name=VIII" evidence="1">
    <location>
        <begin position="532"/>
        <end position="550"/>
    </location>
</feature>
<feature type="transmembrane region" description="Helical; Name=IX" evidence="1">
    <location>
        <begin position="590"/>
        <end position="611"/>
    </location>
</feature>
<feature type="transmembrane region" description="Helical; Name=X" evidence="1">
    <location>
        <begin position="665"/>
        <end position="687"/>
    </location>
</feature>
<feature type="transmembrane region" description="Helical; Name=XI" evidence="1">
    <location>
        <begin position="725"/>
        <end position="745"/>
    </location>
</feature>
<feature type="binding site" evidence="1">
    <location>
        <position position="574"/>
    </location>
    <ligand>
        <name>[4Fe-4S] cluster</name>
        <dbReference type="ChEBI" id="CHEBI:49883"/>
        <note>ligand shared between dimeric partners</note>
    </ligand>
</feature>
<feature type="binding site" evidence="1">
    <location>
        <position position="583"/>
    </location>
    <ligand>
        <name>[4Fe-4S] cluster</name>
        <dbReference type="ChEBI" id="CHEBI:49883"/>
        <note>ligand shared between dimeric partners</note>
    </ligand>
</feature>
<feature type="binding site" description="axial binding residue" evidence="1">
    <location>
        <position position="676"/>
    </location>
    <ligand>
        <name>chlorophyll a'</name>
        <dbReference type="ChEBI" id="CHEBI:189419"/>
        <label>A1</label>
    </ligand>
    <ligandPart>
        <name>Mg</name>
        <dbReference type="ChEBI" id="CHEBI:25107"/>
    </ligandPart>
</feature>
<feature type="binding site" description="axial binding residue" evidence="1">
    <location>
        <position position="684"/>
    </location>
    <ligand>
        <name>chlorophyll a</name>
        <dbReference type="ChEBI" id="CHEBI:58416"/>
        <label>A3</label>
    </ligand>
    <ligandPart>
        <name>Mg</name>
        <dbReference type="ChEBI" id="CHEBI:25107"/>
    </ligandPart>
</feature>
<feature type="binding site" evidence="1">
    <location>
        <position position="692"/>
    </location>
    <ligand>
        <name>chlorophyll a</name>
        <dbReference type="ChEBI" id="CHEBI:58416"/>
        <label>A3</label>
    </ligand>
</feature>
<feature type="binding site" evidence="1">
    <location>
        <position position="693"/>
    </location>
    <ligand>
        <name>phylloquinone</name>
        <dbReference type="ChEBI" id="CHEBI:18067"/>
        <label>A</label>
    </ligand>
</feature>
<evidence type="ECO:0000255" key="1">
    <source>
        <dbReference type="HAMAP-Rule" id="MF_00458"/>
    </source>
</evidence>
<keyword id="KW-0004">4Fe-4S</keyword>
<keyword id="KW-0148">Chlorophyll</keyword>
<keyword id="KW-0150">Chloroplast</keyword>
<keyword id="KW-0157">Chromophore</keyword>
<keyword id="KW-0249">Electron transport</keyword>
<keyword id="KW-0408">Iron</keyword>
<keyword id="KW-0411">Iron-sulfur</keyword>
<keyword id="KW-0460">Magnesium</keyword>
<keyword id="KW-0472">Membrane</keyword>
<keyword id="KW-0479">Metal-binding</keyword>
<keyword id="KW-0560">Oxidoreductase</keyword>
<keyword id="KW-0602">Photosynthesis</keyword>
<keyword id="KW-0603">Photosystem I</keyword>
<keyword id="KW-0934">Plastid</keyword>
<keyword id="KW-0793">Thylakoid</keyword>
<keyword id="KW-0812">Transmembrane</keyword>
<keyword id="KW-1133">Transmembrane helix</keyword>
<keyword id="KW-0813">Transport</keyword>
<reference key="1">
    <citation type="submission" date="2003-11" db="EMBL/GenBank/DDBJ databases">
        <title>Whole genome sequence of Porphyra yezoensis chloroplast.</title>
        <authorList>
            <person name="Kunimoto M."/>
            <person name="Morishima K."/>
            <person name="Yoshikawa M."/>
            <person name="Fukuda S."/>
            <person name="Kobayashi T."/>
            <person name="Kobayashi M."/>
            <person name="Okazaki T."/>
            <person name="Ohara I."/>
            <person name="Nakayama I."/>
        </authorList>
    </citation>
    <scope>NUCLEOTIDE SEQUENCE [LARGE SCALE GENOMIC DNA]</scope>
    <source>
        <strain>U-51</strain>
    </source>
</reference>
<gene>
    <name evidence="1" type="primary">psaA</name>
</gene>
<comment type="function">
    <text>PsaA and PsaB bind P700, the primary electron donor of photosystem I (PSI), as well as the electron acceptors A0, A1 and FX. PSI is a plastocyanin/cytochrome c6-ferredoxin oxidoreductase, converting photonic excitation into a charge separation, which transfers an electron from the donor P700 chlorophyll pair to the spectroscopically characterized acceptors A0, A1, FX, FA and FB in turn. Oxidized P700 is reduced on the lumenal side of the thylakoid membrane by plastocyanin or cytochrome c6.</text>
</comment>
<comment type="catalytic activity">
    <reaction evidence="1">
        <text>reduced [plastocyanin] + hnu + oxidized [2Fe-2S]-[ferredoxin] = oxidized [plastocyanin] + reduced [2Fe-2S]-[ferredoxin]</text>
        <dbReference type="Rhea" id="RHEA:30407"/>
        <dbReference type="Rhea" id="RHEA-COMP:10000"/>
        <dbReference type="Rhea" id="RHEA-COMP:10001"/>
        <dbReference type="Rhea" id="RHEA-COMP:10039"/>
        <dbReference type="Rhea" id="RHEA-COMP:10040"/>
        <dbReference type="ChEBI" id="CHEBI:29036"/>
        <dbReference type="ChEBI" id="CHEBI:30212"/>
        <dbReference type="ChEBI" id="CHEBI:33737"/>
        <dbReference type="ChEBI" id="CHEBI:33738"/>
        <dbReference type="ChEBI" id="CHEBI:49552"/>
        <dbReference type="EC" id="1.97.1.12"/>
    </reaction>
</comment>
<comment type="cofactor">
    <text evidence="1">P700 is a chlorophyll a/chlorophyll a' dimer, A0 is one or more chlorophyll a, A1 is one or both phylloquinones and FX is a shared 4Fe-4S iron-sulfur center.</text>
</comment>
<comment type="subunit">
    <text evidence="1">The PsaA/B heterodimer binds the P700 chlorophyll special pair and subsequent electron acceptors. PSI consists of a core antenna complex that captures photons, and an electron transfer chain that converts photonic excitation into a charge separation. The eukaryotic PSI reaction center is composed of at least 11 subunits.</text>
</comment>
<comment type="subcellular location">
    <subcellularLocation>
        <location evidence="1">Plastid</location>
        <location evidence="1">Chloroplast thylakoid membrane</location>
        <topology evidence="1">Multi-pass membrane protein</topology>
    </subcellularLocation>
</comment>
<comment type="similarity">
    <text evidence="1">Belongs to the PsaA/PsaB family.</text>
</comment>
<geneLocation type="chloroplast"/>
<proteinExistence type="inferred from homology"/>
<name>PSAA_PYRYE</name>